<organism>
    <name type="scientific">Pasteurella multocida (strain Pm70)</name>
    <dbReference type="NCBI Taxonomy" id="272843"/>
    <lineage>
        <taxon>Bacteria</taxon>
        <taxon>Pseudomonadati</taxon>
        <taxon>Pseudomonadota</taxon>
        <taxon>Gammaproteobacteria</taxon>
        <taxon>Pasteurellales</taxon>
        <taxon>Pasteurellaceae</taxon>
        <taxon>Pasteurella</taxon>
    </lineage>
</organism>
<accession>Q9CP13</accession>
<name>FTSK_PASMU</name>
<comment type="function">
    <text evidence="1">Essential cell division protein that coordinates cell division and chromosome segregation. The N-terminus is involved in assembly of the cell-division machinery. The C-terminus functions as a DNA motor that moves dsDNA in an ATP-dependent manner towards the dif recombination site, which is located within the replication terminus region. Translocation stops specifically at Xer-dif sites, where FtsK interacts with the Xer recombinase, allowing activation of chromosome unlinking by recombination. FtsK orienting polar sequences (KOPS) guide the direction of DNA translocation. FtsK can remove proteins from DNA as it translocates, but translocation stops specifically at XerCD-dif site, thereby preventing removal of XerC and XerD from dif (By similarity).</text>
</comment>
<comment type="subunit">
    <text evidence="1">Homohexamer. Forms a ring that surrounds DNA (By similarity).</text>
</comment>
<comment type="subcellular location">
    <subcellularLocation>
        <location evidence="1">Cell inner membrane</location>
        <topology evidence="1">Multi-pass membrane protein</topology>
    </subcellularLocation>
    <text evidence="1">Located at the septum.</text>
</comment>
<comment type="domain">
    <text evidence="1">Consists of an N-terminal domain, which is sufficient for the localization to the septal ring and is required for cell division, followed by a linker domain, and a C-terminal domain, which forms the translocation motor involved in chromosome segregation. The C-terminal domain can be further subdivided into alpha, beta and gamma subdomains. The alpha and beta subdomains multimerise to produce a hexameric ring, contain the nucleotide binding motif and form the DNA pump. The gamma subdomain is a regulatory subdomain that controls translocation of DNA by recognition of KOPS motifs and interacts with XerD recombinase (By similarity).</text>
</comment>
<comment type="similarity">
    <text evidence="4">Belongs to the FtsK/SpoIIIE/SftA family.</text>
</comment>
<evidence type="ECO:0000250" key="1"/>
<evidence type="ECO:0000255" key="2"/>
<evidence type="ECO:0000255" key="3">
    <source>
        <dbReference type="PROSITE-ProRule" id="PRU00289"/>
    </source>
</evidence>
<evidence type="ECO:0000305" key="4"/>
<dbReference type="EMBL" id="AE004439">
    <property type="protein sequence ID" value="AAK02339.1"/>
    <property type="molecule type" value="Genomic_DNA"/>
</dbReference>
<dbReference type="RefSeq" id="WP_010906546.1">
    <property type="nucleotide sequence ID" value="NC_002663.1"/>
</dbReference>
<dbReference type="SMR" id="Q9CP13"/>
<dbReference type="STRING" id="272843.PM0255"/>
<dbReference type="EnsemblBacteria" id="AAK02339">
    <property type="protein sequence ID" value="AAK02339"/>
    <property type="gene ID" value="PM0255"/>
</dbReference>
<dbReference type="KEGG" id="pmu:PM0255"/>
<dbReference type="PATRIC" id="fig|272843.6.peg.263"/>
<dbReference type="HOGENOM" id="CLU_001981_7_1_6"/>
<dbReference type="OrthoDB" id="9807790at2"/>
<dbReference type="Proteomes" id="UP000000809">
    <property type="component" value="Chromosome"/>
</dbReference>
<dbReference type="GO" id="GO:0005886">
    <property type="term" value="C:plasma membrane"/>
    <property type="evidence" value="ECO:0007669"/>
    <property type="project" value="UniProtKB-SubCell"/>
</dbReference>
<dbReference type="GO" id="GO:0005524">
    <property type="term" value="F:ATP binding"/>
    <property type="evidence" value="ECO:0007669"/>
    <property type="project" value="UniProtKB-KW"/>
</dbReference>
<dbReference type="GO" id="GO:0003677">
    <property type="term" value="F:DNA binding"/>
    <property type="evidence" value="ECO:0007669"/>
    <property type="project" value="UniProtKB-KW"/>
</dbReference>
<dbReference type="GO" id="GO:0051301">
    <property type="term" value="P:cell division"/>
    <property type="evidence" value="ECO:0007669"/>
    <property type="project" value="UniProtKB-KW"/>
</dbReference>
<dbReference type="GO" id="GO:0007059">
    <property type="term" value="P:chromosome segregation"/>
    <property type="evidence" value="ECO:0007669"/>
    <property type="project" value="UniProtKB-KW"/>
</dbReference>
<dbReference type="CDD" id="cd01127">
    <property type="entry name" value="TrwB_TraG_TraD_VirD4"/>
    <property type="match status" value="1"/>
</dbReference>
<dbReference type="FunFam" id="3.40.50.300:FF:000209">
    <property type="entry name" value="Cell division protein FtsK"/>
    <property type="match status" value="1"/>
</dbReference>
<dbReference type="Gene3D" id="3.30.980.40">
    <property type="match status" value="1"/>
</dbReference>
<dbReference type="Gene3D" id="3.40.50.300">
    <property type="entry name" value="P-loop containing nucleotide triphosphate hydrolases"/>
    <property type="match status" value="1"/>
</dbReference>
<dbReference type="Gene3D" id="1.10.10.10">
    <property type="entry name" value="Winged helix-like DNA-binding domain superfamily/Winged helix DNA-binding domain"/>
    <property type="match status" value="1"/>
</dbReference>
<dbReference type="InterPro" id="IPR050206">
    <property type="entry name" value="FtsK/SpoIIIE/SftA"/>
</dbReference>
<dbReference type="InterPro" id="IPR025199">
    <property type="entry name" value="FtsK_4TM"/>
</dbReference>
<dbReference type="InterPro" id="IPR041027">
    <property type="entry name" value="FtsK_alpha"/>
</dbReference>
<dbReference type="InterPro" id="IPR002543">
    <property type="entry name" value="FtsK_dom"/>
</dbReference>
<dbReference type="InterPro" id="IPR018541">
    <property type="entry name" value="Ftsk_gamma"/>
</dbReference>
<dbReference type="InterPro" id="IPR027417">
    <property type="entry name" value="P-loop_NTPase"/>
</dbReference>
<dbReference type="InterPro" id="IPR036388">
    <property type="entry name" value="WH-like_DNA-bd_sf"/>
</dbReference>
<dbReference type="InterPro" id="IPR036390">
    <property type="entry name" value="WH_DNA-bd_sf"/>
</dbReference>
<dbReference type="PANTHER" id="PTHR22683:SF41">
    <property type="entry name" value="DNA TRANSLOCASE FTSK"/>
    <property type="match status" value="1"/>
</dbReference>
<dbReference type="PANTHER" id="PTHR22683">
    <property type="entry name" value="SPORULATION PROTEIN RELATED"/>
    <property type="match status" value="1"/>
</dbReference>
<dbReference type="Pfam" id="PF13491">
    <property type="entry name" value="FtsK_4TM"/>
    <property type="match status" value="1"/>
</dbReference>
<dbReference type="Pfam" id="PF17854">
    <property type="entry name" value="FtsK_alpha"/>
    <property type="match status" value="1"/>
</dbReference>
<dbReference type="Pfam" id="PF09397">
    <property type="entry name" value="FtsK_gamma"/>
    <property type="match status" value="1"/>
</dbReference>
<dbReference type="Pfam" id="PF01580">
    <property type="entry name" value="FtsK_SpoIIIE"/>
    <property type="match status" value="1"/>
</dbReference>
<dbReference type="SMART" id="SM00843">
    <property type="entry name" value="Ftsk_gamma"/>
    <property type="match status" value="1"/>
</dbReference>
<dbReference type="SUPFAM" id="SSF52540">
    <property type="entry name" value="P-loop containing nucleoside triphosphate hydrolases"/>
    <property type="match status" value="1"/>
</dbReference>
<dbReference type="SUPFAM" id="SSF46785">
    <property type="entry name" value="Winged helix' DNA-binding domain"/>
    <property type="match status" value="1"/>
</dbReference>
<dbReference type="PROSITE" id="PS50901">
    <property type="entry name" value="FTSK"/>
    <property type="match status" value="1"/>
</dbReference>
<sequence length="930" mass="103039">MIKRISEKFTPKQYLLAFFFLVGMLFGVYLIVAWSSYSPLDNSWASSSYIPTTINKAGRFGAWFIDLFFVLFGHVGHIIPFLIFGISFYFWRRKGKVPFSFFRLSLWLLGFSIFLCGVCVLFTLLFSNTPYYLSGGVLGGSLVTAFFPMLDFVGLMLSGTLLALLGFVLCSGTSLIRSCIYFYDWLTMKNPTQTQEEETISTTPVQQELALQEEPSIQSINEGERVFVSEAPSATMDEEKSLINIENLIQIQGLESASQAKESTIPTVPLDDVNQVELGGYAVEPELALPSVSVAFVEDTALSSSEAEHEDSKPFTTQIPHTAGEPLVATEFAMPKVSLSPLDTSLSDNSEIAREDESDLARQFAAQEQQRREEMALRAKALNAEEALQTILAEPEIRQNSTADVSDSTTPHYKPYGESLIHPALQQKVTTQVKPTTPMPSLDLLEHRPSQAHRITQEEIIETSQRIEHQLRNFGVKATVKDVLVGPVVTRYELELQPGVKASKVSSIDTDLARALMFRSIRVAEVIPGKPYIGIETPNVNRQMVTLREVLDSDVFRQSNSLLSMALGKDISGKPVVVDLAKMPHLLVAGSTGSGKSVGVNTMILSLLFRVKPEEVKFIMIDPKVVELSIYDGIPHLLTEVVTDMKKAANALRWCVDEMERRYQLLSALRVRNIEGYNEKIEEYEAMNMPIPNPIWRPGDTMDTLPPALEKLSYIVVIVDEFADLMMVAGKQVEELIARLAQKARAIGIHLILATQRPSVDVITGLIKANIPSRIAFTVASKIDSRTILDQVGAEALLGRGDMLYSGAGSSDLVRVHGAFMSDDEVARVVDDWKARGKPNYIEGILDSGEDEATESNGANSDAGELDDLFDEVVEFVTSTGTTSTSYIQRKFRVGFNRAARIMDQLEEQGIVSAMQNGKREVLARRSSDF</sequence>
<feature type="chain" id="PRO_0000098277" description="DNA translocase FtsK">
    <location>
        <begin position="1"/>
        <end position="930"/>
    </location>
</feature>
<feature type="transmembrane region" description="Helical" evidence="2">
    <location>
        <begin position="14"/>
        <end position="34"/>
    </location>
</feature>
<feature type="transmembrane region" description="Helical" evidence="2">
    <location>
        <begin position="68"/>
        <end position="88"/>
    </location>
</feature>
<feature type="transmembrane region" description="Helical" evidence="2">
    <location>
        <begin position="106"/>
        <end position="126"/>
    </location>
</feature>
<feature type="transmembrane region" description="Helical" evidence="2">
    <location>
        <begin position="128"/>
        <end position="148"/>
    </location>
</feature>
<feature type="transmembrane region" description="Helical" evidence="2">
    <location>
        <begin position="149"/>
        <end position="169"/>
    </location>
</feature>
<feature type="topological domain" description="Cytoplasmic" evidence="2">
    <location>
        <begin position="170"/>
        <end position="930"/>
    </location>
</feature>
<feature type="domain" description="FtsK" evidence="3">
    <location>
        <begin position="573"/>
        <end position="786"/>
    </location>
</feature>
<feature type="binding site" evidence="3">
    <location>
        <begin position="593"/>
        <end position="598"/>
    </location>
    <ligand>
        <name>ATP</name>
        <dbReference type="ChEBI" id="CHEBI:30616"/>
    </ligand>
</feature>
<keyword id="KW-0067">ATP-binding</keyword>
<keyword id="KW-0131">Cell cycle</keyword>
<keyword id="KW-0132">Cell division</keyword>
<keyword id="KW-0997">Cell inner membrane</keyword>
<keyword id="KW-1003">Cell membrane</keyword>
<keyword id="KW-0159">Chromosome partition</keyword>
<keyword id="KW-0238">DNA-binding</keyword>
<keyword id="KW-0472">Membrane</keyword>
<keyword id="KW-0547">Nucleotide-binding</keyword>
<keyword id="KW-1185">Reference proteome</keyword>
<keyword id="KW-0812">Transmembrane</keyword>
<keyword id="KW-1133">Transmembrane helix</keyword>
<protein>
    <recommendedName>
        <fullName>DNA translocase FtsK</fullName>
    </recommendedName>
</protein>
<proteinExistence type="inferred from homology"/>
<reference key="1">
    <citation type="journal article" date="2001" name="Proc. Natl. Acad. Sci. U.S.A.">
        <title>Complete genomic sequence of Pasteurella multocida Pm70.</title>
        <authorList>
            <person name="May B.J."/>
            <person name="Zhang Q."/>
            <person name="Li L.L."/>
            <person name="Paustian M.L."/>
            <person name="Whittam T.S."/>
            <person name="Kapur V."/>
        </authorList>
    </citation>
    <scope>NUCLEOTIDE SEQUENCE [LARGE SCALE GENOMIC DNA]</scope>
    <source>
        <strain>Pm70</strain>
    </source>
</reference>
<gene>
    <name type="primary">ftsK</name>
    <name type="ordered locus">PM0255</name>
</gene>